<comment type="function">
    <text>Involved in the transposition of the insertion sequence.</text>
</comment>
<comment type="similarity">
    <text evidence="1">Belongs to the transposase 11 family.</text>
</comment>
<sequence>MNLSIQDELQLFSEELYRHLTPSLLEELAKELGFVKRKRKFSGNELATICIWVSQRTASDSLVRLCSQLHAATGPLMSPEGLNKRFDKKAVEFLKYIFSALWKSKLCKTSAISSAALTYFQRIRILDATIFQVPKHLAHVYPGSGGCAQTAGIKIQLEYDLHSGQFLNFQVGPGKNNDKTFGTDCLDTLRPGDLCIRDLGYFSLEDLDQMDQRGVCYISRLKLNHTVYTKNPFPEYFRNGTIKKQSQYIQVDLENIMHTLKPGQTYEIKESYIGKNQRLFTRVIIYRLTEEQILERRKKQSYTESKKGITFSEKSKRLTGINIYVTNTPWEVVPMEQIHDFYSLRWQIEIIFKTWKSLFQIHHWQTIKQERLECHVYGKLIAIFICSSTMFKMRQLLLQKHKRELSEYKAIGMIQDHLSLLYQAIQRNTRIITKVLIRLFTLLKKNGRKSHRYEKKTIFDIMGVVYEYNGLRKQKKAA</sequence>
<evidence type="ECO:0000305" key="1"/>
<feature type="chain" id="PRO_0000173307" description="Transposase for insertion sequence element IS231C">
    <location>
        <begin position="1"/>
        <end position="478"/>
    </location>
</feature>
<organism>
    <name type="scientific">Bacillus thuringiensis subsp. berliner</name>
    <dbReference type="NCBI Taxonomy" id="1434"/>
    <lineage>
        <taxon>Bacteria</taxon>
        <taxon>Bacillati</taxon>
        <taxon>Bacillota</taxon>
        <taxon>Bacilli</taxon>
        <taxon>Bacillales</taxon>
        <taxon>Bacillaceae</taxon>
        <taxon>Bacillus</taxon>
        <taxon>Bacillus cereus group</taxon>
    </lineage>
</organism>
<protein>
    <recommendedName>
        <fullName>Transposase for insertion sequence element IS231C</fullName>
    </recommendedName>
</protein>
<dbReference type="EMBL" id="M16159">
    <property type="protein sequence ID" value="AAA83518.1"/>
    <property type="molecule type" value="Genomic_DNA"/>
</dbReference>
<dbReference type="PIR" id="C29051">
    <property type="entry name" value="C29051"/>
</dbReference>
<dbReference type="GO" id="GO:0003677">
    <property type="term" value="F:DNA binding"/>
    <property type="evidence" value="ECO:0007669"/>
    <property type="project" value="UniProtKB-KW"/>
</dbReference>
<dbReference type="GO" id="GO:0004803">
    <property type="term" value="F:transposase activity"/>
    <property type="evidence" value="ECO:0007669"/>
    <property type="project" value="InterPro"/>
</dbReference>
<dbReference type="GO" id="GO:0006313">
    <property type="term" value="P:DNA transposition"/>
    <property type="evidence" value="ECO:0007669"/>
    <property type="project" value="InterPro"/>
</dbReference>
<dbReference type="InterPro" id="IPR012337">
    <property type="entry name" value="RNaseH-like_sf"/>
</dbReference>
<dbReference type="InterPro" id="IPR047952">
    <property type="entry name" value="Transpos_IS4"/>
</dbReference>
<dbReference type="InterPro" id="IPR002559">
    <property type="entry name" value="Transposase_11"/>
</dbReference>
<dbReference type="NCBIfam" id="NF033592">
    <property type="entry name" value="transpos_IS4_1"/>
    <property type="match status" value="1"/>
</dbReference>
<dbReference type="PANTHER" id="PTHR33258">
    <property type="entry name" value="TRANSPOSASE INSL FOR INSERTION SEQUENCE ELEMENT IS186A-RELATED"/>
    <property type="match status" value="1"/>
</dbReference>
<dbReference type="PANTHER" id="PTHR33258:SF1">
    <property type="entry name" value="TRANSPOSASE INSL FOR INSERTION SEQUENCE ELEMENT IS186A-RELATED"/>
    <property type="match status" value="1"/>
</dbReference>
<dbReference type="Pfam" id="PF01609">
    <property type="entry name" value="DDE_Tnp_1"/>
    <property type="match status" value="1"/>
</dbReference>
<dbReference type="SUPFAM" id="SSF53098">
    <property type="entry name" value="Ribonuclease H-like"/>
    <property type="match status" value="1"/>
</dbReference>
<name>T231C_BACTB</name>
<accession>P12250</accession>
<keyword id="KW-0233">DNA recombination</keyword>
<keyword id="KW-0238">DNA-binding</keyword>
<keyword id="KW-0814">Transposable element</keyword>
<keyword id="KW-0815">Transposition</keyword>
<reference key="1">
    <citation type="journal article" date="1987" name="Gene">
        <title>Cloning and nucleotide sequence of different iso-IS231 elements and their structural association with the Tn4430 transposon in Bacillus thuringiensis.</title>
        <authorList>
            <person name="Mahillon J."/>
            <person name="Seurinck J."/>
            <person name="Delcour J."/>
            <person name="Zabeau M."/>
        </authorList>
    </citation>
    <scope>NUCLEOTIDE SEQUENCE [GENOMIC DNA]</scope>
    <source>
        <strain>1715</strain>
    </source>
</reference>
<proteinExistence type="inferred from homology"/>